<dbReference type="EC" id="6.3.5.-" evidence="1"/>
<dbReference type="EMBL" id="CP000969">
    <property type="protein sequence ID" value="ACB09882.1"/>
    <property type="molecule type" value="Genomic_DNA"/>
</dbReference>
<dbReference type="RefSeq" id="WP_012311179.1">
    <property type="nucleotide sequence ID" value="NC_010483.1"/>
</dbReference>
<dbReference type="SMR" id="B1LC74"/>
<dbReference type="KEGG" id="trq:TRQ2_1546"/>
<dbReference type="HOGENOM" id="CLU_019240_0_0_0"/>
<dbReference type="Proteomes" id="UP000001687">
    <property type="component" value="Chromosome"/>
</dbReference>
<dbReference type="GO" id="GO:0050566">
    <property type="term" value="F:asparaginyl-tRNA synthase (glutamine-hydrolyzing) activity"/>
    <property type="evidence" value="ECO:0007669"/>
    <property type="project" value="RHEA"/>
</dbReference>
<dbReference type="GO" id="GO:0005524">
    <property type="term" value="F:ATP binding"/>
    <property type="evidence" value="ECO:0007669"/>
    <property type="project" value="UniProtKB-KW"/>
</dbReference>
<dbReference type="GO" id="GO:0050567">
    <property type="term" value="F:glutaminyl-tRNA synthase (glutamine-hydrolyzing) activity"/>
    <property type="evidence" value="ECO:0007669"/>
    <property type="project" value="UniProtKB-UniRule"/>
</dbReference>
<dbReference type="GO" id="GO:0070681">
    <property type="term" value="P:glutaminyl-tRNAGln biosynthesis via transamidation"/>
    <property type="evidence" value="ECO:0007669"/>
    <property type="project" value="TreeGrafter"/>
</dbReference>
<dbReference type="GO" id="GO:0006412">
    <property type="term" value="P:translation"/>
    <property type="evidence" value="ECO:0007669"/>
    <property type="project" value="UniProtKB-UniRule"/>
</dbReference>
<dbReference type="FunFam" id="1.10.10.410:FF:000001">
    <property type="entry name" value="Aspartyl/glutamyl-tRNA(Asn/Gln) amidotransferase subunit B"/>
    <property type="match status" value="1"/>
</dbReference>
<dbReference type="FunFam" id="1.10.150.380:FF:000001">
    <property type="entry name" value="Aspartyl/glutamyl-tRNA(Asn/Gln) amidotransferase subunit B"/>
    <property type="match status" value="1"/>
</dbReference>
<dbReference type="Gene3D" id="1.10.10.410">
    <property type="match status" value="1"/>
</dbReference>
<dbReference type="Gene3D" id="1.10.150.380">
    <property type="entry name" value="GatB domain, N-terminal subdomain"/>
    <property type="match status" value="1"/>
</dbReference>
<dbReference type="HAMAP" id="MF_00121">
    <property type="entry name" value="GatB"/>
    <property type="match status" value="1"/>
</dbReference>
<dbReference type="InterPro" id="IPR017959">
    <property type="entry name" value="Asn/Gln-tRNA_amidoTrfase_suB/E"/>
</dbReference>
<dbReference type="InterPro" id="IPR006075">
    <property type="entry name" value="Asn/Gln-tRNA_Trfase_suB/E_cat"/>
</dbReference>
<dbReference type="InterPro" id="IPR018027">
    <property type="entry name" value="Asn/Gln_amidotransferase"/>
</dbReference>
<dbReference type="InterPro" id="IPR003789">
    <property type="entry name" value="Asn/Gln_tRNA_amidoTrase-B-like"/>
</dbReference>
<dbReference type="InterPro" id="IPR004413">
    <property type="entry name" value="GatB"/>
</dbReference>
<dbReference type="InterPro" id="IPR042114">
    <property type="entry name" value="GatB_C_1"/>
</dbReference>
<dbReference type="InterPro" id="IPR023168">
    <property type="entry name" value="GatB_Yqey_C_2"/>
</dbReference>
<dbReference type="InterPro" id="IPR017958">
    <property type="entry name" value="Gln-tRNA_amidoTrfase_suB_CS"/>
</dbReference>
<dbReference type="InterPro" id="IPR014746">
    <property type="entry name" value="Gln_synth/guanido_kin_cat_dom"/>
</dbReference>
<dbReference type="NCBIfam" id="TIGR00133">
    <property type="entry name" value="gatB"/>
    <property type="match status" value="1"/>
</dbReference>
<dbReference type="NCBIfam" id="NF004012">
    <property type="entry name" value="PRK05477.1-2"/>
    <property type="match status" value="1"/>
</dbReference>
<dbReference type="NCBIfam" id="NF004014">
    <property type="entry name" value="PRK05477.1-4"/>
    <property type="match status" value="1"/>
</dbReference>
<dbReference type="PANTHER" id="PTHR11659">
    <property type="entry name" value="GLUTAMYL-TRNA GLN AMIDOTRANSFERASE SUBUNIT B MITOCHONDRIAL AND PROKARYOTIC PET112-RELATED"/>
    <property type="match status" value="1"/>
</dbReference>
<dbReference type="PANTHER" id="PTHR11659:SF0">
    <property type="entry name" value="GLUTAMYL-TRNA(GLN) AMIDOTRANSFERASE SUBUNIT B, MITOCHONDRIAL"/>
    <property type="match status" value="1"/>
</dbReference>
<dbReference type="Pfam" id="PF02934">
    <property type="entry name" value="GatB_N"/>
    <property type="match status" value="1"/>
</dbReference>
<dbReference type="Pfam" id="PF02637">
    <property type="entry name" value="GatB_Yqey"/>
    <property type="match status" value="1"/>
</dbReference>
<dbReference type="SMART" id="SM00845">
    <property type="entry name" value="GatB_Yqey"/>
    <property type="match status" value="1"/>
</dbReference>
<dbReference type="SUPFAM" id="SSF89095">
    <property type="entry name" value="GatB/YqeY motif"/>
    <property type="match status" value="1"/>
</dbReference>
<dbReference type="SUPFAM" id="SSF55931">
    <property type="entry name" value="Glutamine synthetase/guanido kinase"/>
    <property type="match status" value="1"/>
</dbReference>
<dbReference type="PROSITE" id="PS01234">
    <property type="entry name" value="GATB"/>
    <property type="match status" value="1"/>
</dbReference>
<accession>B1LC74</accession>
<protein>
    <recommendedName>
        <fullName evidence="1">Aspartyl/glutamyl-tRNA(Asn/Gln) amidotransferase subunit B</fullName>
        <shortName evidence="1">Asp/Glu-ADT subunit B</shortName>
        <ecNumber evidence="1">6.3.5.-</ecNumber>
    </recommendedName>
</protein>
<sequence length="482" mass="55426">MRYRPVIGLEIHVQLSTKTKAFCSCPADVFELPPNTAICPVCTGQPGALPVPNEEMIRFAVKTALALNCKIHKYSRFDRKNYFYPDLPKGYQISQYFYPIATEGFLEIDGDEGKKKVRIRRLHLEEDAGKLVHEGDSITRASYSLVDMNRCGVPLIEIVTEPDISSPREARVFMEKLRSIVRYLGVSTGDMEKGALRCDANISVVDTETGRQSNRVEVKNMNSFRFVEKALEYEFERIVKAMERGEDVERETRGWDMTTKTTVSMRGKEEESDYRYFPEPDIPPVVLSDEYLEEVKKELPELPDEKAKRFMREYDLPEYDAKVLTSSKELAEFFEECVKVVNRPKDLSNWIMTEVLRELNERNIEITESKLTPQHFADLFKLMDEGKISIKIAKEIFPEVFETGKMPSQIVEEKGLVQISDEKLIEELVKKAMEQNPKAVQDYKSGKKKAAGFFVGYVMRETKGKANPELTNRIIQKLLEGE</sequence>
<keyword id="KW-0067">ATP-binding</keyword>
<keyword id="KW-0436">Ligase</keyword>
<keyword id="KW-0547">Nucleotide-binding</keyword>
<keyword id="KW-0648">Protein biosynthesis</keyword>
<feature type="chain" id="PRO_1000095251" description="Aspartyl/glutamyl-tRNA(Asn/Gln) amidotransferase subunit B">
    <location>
        <begin position="1"/>
        <end position="482"/>
    </location>
</feature>
<organism>
    <name type="scientific">Thermotoga sp. (strain RQ2)</name>
    <dbReference type="NCBI Taxonomy" id="126740"/>
    <lineage>
        <taxon>Bacteria</taxon>
        <taxon>Thermotogati</taxon>
        <taxon>Thermotogota</taxon>
        <taxon>Thermotogae</taxon>
        <taxon>Thermotogales</taxon>
        <taxon>Thermotogaceae</taxon>
        <taxon>Thermotoga</taxon>
    </lineage>
</organism>
<evidence type="ECO:0000255" key="1">
    <source>
        <dbReference type="HAMAP-Rule" id="MF_00121"/>
    </source>
</evidence>
<name>GATB_THESQ</name>
<comment type="function">
    <text evidence="1">Allows the formation of correctly charged Asn-tRNA(Asn) or Gln-tRNA(Gln) through the transamidation of misacylated Asp-tRNA(Asn) or Glu-tRNA(Gln) in organisms which lack either or both of asparaginyl-tRNA or glutaminyl-tRNA synthetases. The reaction takes place in the presence of glutamine and ATP through an activated phospho-Asp-tRNA(Asn) or phospho-Glu-tRNA(Gln).</text>
</comment>
<comment type="catalytic activity">
    <reaction evidence="1">
        <text>L-glutamyl-tRNA(Gln) + L-glutamine + ATP + H2O = L-glutaminyl-tRNA(Gln) + L-glutamate + ADP + phosphate + H(+)</text>
        <dbReference type="Rhea" id="RHEA:17521"/>
        <dbReference type="Rhea" id="RHEA-COMP:9681"/>
        <dbReference type="Rhea" id="RHEA-COMP:9684"/>
        <dbReference type="ChEBI" id="CHEBI:15377"/>
        <dbReference type="ChEBI" id="CHEBI:15378"/>
        <dbReference type="ChEBI" id="CHEBI:29985"/>
        <dbReference type="ChEBI" id="CHEBI:30616"/>
        <dbReference type="ChEBI" id="CHEBI:43474"/>
        <dbReference type="ChEBI" id="CHEBI:58359"/>
        <dbReference type="ChEBI" id="CHEBI:78520"/>
        <dbReference type="ChEBI" id="CHEBI:78521"/>
        <dbReference type="ChEBI" id="CHEBI:456216"/>
    </reaction>
</comment>
<comment type="catalytic activity">
    <reaction evidence="1">
        <text>L-aspartyl-tRNA(Asn) + L-glutamine + ATP + H2O = L-asparaginyl-tRNA(Asn) + L-glutamate + ADP + phosphate + 2 H(+)</text>
        <dbReference type="Rhea" id="RHEA:14513"/>
        <dbReference type="Rhea" id="RHEA-COMP:9674"/>
        <dbReference type="Rhea" id="RHEA-COMP:9677"/>
        <dbReference type="ChEBI" id="CHEBI:15377"/>
        <dbReference type="ChEBI" id="CHEBI:15378"/>
        <dbReference type="ChEBI" id="CHEBI:29985"/>
        <dbReference type="ChEBI" id="CHEBI:30616"/>
        <dbReference type="ChEBI" id="CHEBI:43474"/>
        <dbReference type="ChEBI" id="CHEBI:58359"/>
        <dbReference type="ChEBI" id="CHEBI:78515"/>
        <dbReference type="ChEBI" id="CHEBI:78516"/>
        <dbReference type="ChEBI" id="CHEBI:456216"/>
    </reaction>
</comment>
<comment type="subunit">
    <text evidence="1">Heterotrimer of A, B and C subunits.</text>
</comment>
<comment type="similarity">
    <text evidence="1">Belongs to the GatB/GatE family. GatB subfamily.</text>
</comment>
<gene>
    <name evidence="1" type="primary">gatB</name>
    <name type="ordered locus">TRQ2_1546</name>
</gene>
<reference key="1">
    <citation type="journal article" date="2011" name="J. Bacteriol.">
        <title>Genome sequence of Thermotoga sp. strain RQ2, a hyperthermophilic bacterium isolated from a geothermally heated region of the seafloor near Ribeira Quente, the Azores.</title>
        <authorList>
            <person name="Swithers K.S."/>
            <person name="DiPippo J.L."/>
            <person name="Bruce D.C."/>
            <person name="Detter C."/>
            <person name="Tapia R."/>
            <person name="Han S."/>
            <person name="Saunders E."/>
            <person name="Goodwin L.A."/>
            <person name="Han J."/>
            <person name="Woyke T."/>
            <person name="Pitluck S."/>
            <person name="Pennacchio L."/>
            <person name="Nolan M."/>
            <person name="Mikhailova N."/>
            <person name="Lykidis A."/>
            <person name="Land M.L."/>
            <person name="Brettin T."/>
            <person name="Stetter K.O."/>
            <person name="Nelson K.E."/>
            <person name="Gogarten J.P."/>
            <person name="Noll K.M."/>
        </authorList>
    </citation>
    <scope>NUCLEOTIDE SEQUENCE [LARGE SCALE GENOMIC DNA]</scope>
    <source>
        <strain>RQ2</strain>
    </source>
</reference>
<proteinExistence type="inferred from homology"/>